<gene>
    <name evidence="1" type="primary">ligA</name>
    <name type="ordered locus">NE1753</name>
</gene>
<proteinExistence type="inferred from homology"/>
<reference key="1">
    <citation type="journal article" date="2003" name="J. Bacteriol.">
        <title>Complete genome sequence of the ammonia-oxidizing bacterium and obligate chemolithoautotroph Nitrosomonas europaea.</title>
        <authorList>
            <person name="Chain P."/>
            <person name="Lamerdin J.E."/>
            <person name="Larimer F.W."/>
            <person name="Regala W."/>
            <person name="Lao V."/>
            <person name="Land M.L."/>
            <person name="Hauser L."/>
            <person name="Hooper A.B."/>
            <person name="Klotz M.G."/>
            <person name="Norton J."/>
            <person name="Sayavedra-Soto L.A."/>
            <person name="Arciero D.M."/>
            <person name="Hommes N.G."/>
            <person name="Whittaker M.M."/>
            <person name="Arp D.J."/>
        </authorList>
    </citation>
    <scope>NUCLEOTIDE SEQUENCE [LARGE SCALE GENOMIC DNA]</scope>
    <source>
        <strain>ATCC 19718 / CIP 103999 / KCTC 2705 / NBRC 14298</strain>
    </source>
</reference>
<feature type="chain" id="PRO_0000313339" description="DNA ligase">
    <location>
        <begin position="1"/>
        <end position="681"/>
    </location>
</feature>
<feature type="domain" description="BRCT" evidence="1">
    <location>
        <begin position="598"/>
        <end position="681"/>
    </location>
</feature>
<feature type="active site" description="N6-AMP-lysine intermediate" evidence="1">
    <location>
        <position position="117"/>
    </location>
</feature>
<feature type="binding site" evidence="1">
    <location>
        <begin position="35"/>
        <end position="39"/>
    </location>
    <ligand>
        <name>NAD(+)</name>
        <dbReference type="ChEBI" id="CHEBI:57540"/>
    </ligand>
</feature>
<feature type="binding site" evidence="1">
    <location>
        <begin position="84"/>
        <end position="85"/>
    </location>
    <ligand>
        <name>NAD(+)</name>
        <dbReference type="ChEBI" id="CHEBI:57540"/>
    </ligand>
</feature>
<feature type="binding site" evidence="1">
    <location>
        <position position="115"/>
    </location>
    <ligand>
        <name>NAD(+)</name>
        <dbReference type="ChEBI" id="CHEBI:57540"/>
    </ligand>
</feature>
<feature type="binding site" evidence="1">
    <location>
        <position position="138"/>
    </location>
    <ligand>
        <name>NAD(+)</name>
        <dbReference type="ChEBI" id="CHEBI:57540"/>
    </ligand>
</feature>
<feature type="binding site" evidence="1">
    <location>
        <position position="175"/>
    </location>
    <ligand>
        <name>NAD(+)</name>
        <dbReference type="ChEBI" id="CHEBI:57540"/>
    </ligand>
</feature>
<feature type="binding site" evidence="1">
    <location>
        <position position="293"/>
    </location>
    <ligand>
        <name>NAD(+)</name>
        <dbReference type="ChEBI" id="CHEBI:57540"/>
    </ligand>
</feature>
<feature type="binding site" evidence="1">
    <location>
        <position position="317"/>
    </location>
    <ligand>
        <name>NAD(+)</name>
        <dbReference type="ChEBI" id="CHEBI:57540"/>
    </ligand>
</feature>
<feature type="binding site" evidence="1">
    <location>
        <position position="411"/>
    </location>
    <ligand>
        <name>Zn(2+)</name>
        <dbReference type="ChEBI" id="CHEBI:29105"/>
    </ligand>
</feature>
<feature type="binding site" evidence="1">
    <location>
        <position position="414"/>
    </location>
    <ligand>
        <name>Zn(2+)</name>
        <dbReference type="ChEBI" id="CHEBI:29105"/>
    </ligand>
</feature>
<feature type="binding site" evidence="1">
    <location>
        <position position="429"/>
    </location>
    <ligand>
        <name>Zn(2+)</name>
        <dbReference type="ChEBI" id="CHEBI:29105"/>
    </ligand>
</feature>
<feature type="binding site" evidence="1">
    <location>
        <position position="435"/>
    </location>
    <ligand>
        <name>Zn(2+)</name>
        <dbReference type="ChEBI" id="CHEBI:29105"/>
    </ligand>
</feature>
<protein>
    <recommendedName>
        <fullName evidence="1">DNA ligase</fullName>
        <ecNumber evidence="1">6.5.1.2</ecNumber>
    </recommendedName>
    <alternativeName>
        <fullName evidence="1">Polydeoxyribonucleotide synthase [NAD(+)]</fullName>
    </alternativeName>
</protein>
<keyword id="KW-0227">DNA damage</keyword>
<keyword id="KW-0234">DNA repair</keyword>
<keyword id="KW-0235">DNA replication</keyword>
<keyword id="KW-0436">Ligase</keyword>
<keyword id="KW-0460">Magnesium</keyword>
<keyword id="KW-0464">Manganese</keyword>
<keyword id="KW-0479">Metal-binding</keyword>
<keyword id="KW-0520">NAD</keyword>
<keyword id="KW-1185">Reference proteome</keyword>
<keyword id="KW-0862">Zinc</keyword>
<comment type="function">
    <text evidence="1">DNA ligase that catalyzes the formation of phosphodiester linkages between 5'-phosphoryl and 3'-hydroxyl groups in double-stranded DNA using NAD as a coenzyme and as the energy source for the reaction. It is essential for DNA replication and repair of damaged DNA.</text>
</comment>
<comment type="catalytic activity">
    <reaction evidence="1">
        <text>NAD(+) + (deoxyribonucleotide)n-3'-hydroxyl + 5'-phospho-(deoxyribonucleotide)m = (deoxyribonucleotide)n+m + AMP + beta-nicotinamide D-nucleotide.</text>
        <dbReference type="EC" id="6.5.1.2"/>
    </reaction>
</comment>
<comment type="cofactor">
    <cofactor evidence="1">
        <name>Mg(2+)</name>
        <dbReference type="ChEBI" id="CHEBI:18420"/>
    </cofactor>
    <cofactor evidence="1">
        <name>Mn(2+)</name>
        <dbReference type="ChEBI" id="CHEBI:29035"/>
    </cofactor>
</comment>
<comment type="similarity">
    <text evidence="1">Belongs to the NAD-dependent DNA ligase family. LigA subfamily.</text>
</comment>
<organism>
    <name type="scientific">Nitrosomonas europaea (strain ATCC 19718 / CIP 103999 / KCTC 2705 / NBRC 14298)</name>
    <dbReference type="NCBI Taxonomy" id="228410"/>
    <lineage>
        <taxon>Bacteria</taxon>
        <taxon>Pseudomonadati</taxon>
        <taxon>Pseudomonadota</taxon>
        <taxon>Betaproteobacteria</taxon>
        <taxon>Nitrosomonadales</taxon>
        <taxon>Nitrosomonadaceae</taxon>
        <taxon>Nitrosomonas</taxon>
    </lineage>
</organism>
<sequence length="681" mass="75129">MISENTIEERLQALRAAIALHDFHYYVQDAPVIPDAEYDALFRTLQQLEQQYPHLVTPDSPTQRVGAPPLKVFAQLTHQTPMLSLANAFSEEEVTAFDRRIREALNIDRVDYAVEPKFDGLAISLIYANGILTKGATRGDGYTGEDITLNLRTIPSIPLRLQVPFPTGQFEVRGEVVMLKTDFERLNEQQRKNGEKTFVNPRNAAAGSLRQLDSRITAMRRLTFFAYGIGAYHEDQPIFSTHSEILAYLATQQFLVARQSSTVMGANGLLAYYREMNAVRLSLPYEIDGVVYKVNDLAQQEKLGYVSRAPRFAIAHKFPAQEVSTELLAIEIQVGRTGALTPVARLAPVFVGGVTVTNATLHNEDEVQRKQIMIGDTVIVRRAGDVIPEVVAVIVERRPTHAQAFVMPDHCPVCGSKAVRLPDEAVTRCTGGLYCPAQRKQAILHFASRRAIDIDGLGEKLVDQLIDRELVHTPADLYRLDIDTLAGLERMAGKSARNLVTAIEDSKKTTLPRFIYALGIRHVGEATAKALASHTGDLDRLMDMNAEQLQQIPDIGPIVAQSIADFFSEAHNREVIEQLLSCGLQWEKPSHIAQPSSRTNLAVPGKTFVLTGTLPTMTRDQAKNRIEQQGGKVTGSVSSATSYVVAGSDPGSKYARAIELGIPVLDEDQLLSLLRDTSSSE</sequence>
<evidence type="ECO:0000255" key="1">
    <source>
        <dbReference type="HAMAP-Rule" id="MF_01588"/>
    </source>
</evidence>
<name>DNLJ_NITEU</name>
<dbReference type="EC" id="6.5.1.2" evidence="1"/>
<dbReference type="EMBL" id="AL954747">
    <property type="protein sequence ID" value="CAD85664.1"/>
    <property type="molecule type" value="Genomic_DNA"/>
</dbReference>
<dbReference type="RefSeq" id="WP_011112305.1">
    <property type="nucleotide sequence ID" value="NC_004757.1"/>
</dbReference>
<dbReference type="SMR" id="Q82TW6"/>
<dbReference type="STRING" id="228410.NE1753"/>
<dbReference type="GeneID" id="87104913"/>
<dbReference type="KEGG" id="neu:NE1753"/>
<dbReference type="eggNOG" id="COG0272">
    <property type="taxonomic scope" value="Bacteria"/>
</dbReference>
<dbReference type="HOGENOM" id="CLU_007764_2_1_4"/>
<dbReference type="OrthoDB" id="9759736at2"/>
<dbReference type="PhylomeDB" id="Q82TW6"/>
<dbReference type="Proteomes" id="UP000001416">
    <property type="component" value="Chromosome"/>
</dbReference>
<dbReference type="GO" id="GO:0005829">
    <property type="term" value="C:cytosol"/>
    <property type="evidence" value="ECO:0007669"/>
    <property type="project" value="TreeGrafter"/>
</dbReference>
<dbReference type="GO" id="GO:0003677">
    <property type="term" value="F:DNA binding"/>
    <property type="evidence" value="ECO:0007669"/>
    <property type="project" value="InterPro"/>
</dbReference>
<dbReference type="GO" id="GO:0003911">
    <property type="term" value="F:DNA ligase (NAD+) activity"/>
    <property type="evidence" value="ECO:0007669"/>
    <property type="project" value="UniProtKB-UniRule"/>
</dbReference>
<dbReference type="GO" id="GO:0046872">
    <property type="term" value="F:metal ion binding"/>
    <property type="evidence" value="ECO:0007669"/>
    <property type="project" value="UniProtKB-KW"/>
</dbReference>
<dbReference type="GO" id="GO:0006281">
    <property type="term" value="P:DNA repair"/>
    <property type="evidence" value="ECO:0007669"/>
    <property type="project" value="UniProtKB-KW"/>
</dbReference>
<dbReference type="GO" id="GO:0006260">
    <property type="term" value="P:DNA replication"/>
    <property type="evidence" value="ECO:0007669"/>
    <property type="project" value="UniProtKB-KW"/>
</dbReference>
<dbReference type="CDD" id="cd00114">
    <property type="entry name" value="LIGANc"/>
    <property type="match status" value="1"/>
</dbReference>
<dbReference type="FunFam" id="1.10.150.20:FF:000006">
    <property type="entry name" value="DNA ligase"/>
    <property type="match status" value="1"/>
</dbReference>
<dbReference type="FunFam" id="1.10.150.20:FF:000007">
    <property type="entry name" value="DNA ligase"/>
    <property type="match status" value="1"/>
</dbReference>
<dbReference type="FunFam" id="1.10.287.610:FF:000002">
    <property type="entry name" value="DNA ligase"/>
    <property type="match status" value="1"/>
</dbReference>
<dbReference type="FunFam" id="2.40.50.140:FF:000012">
    <property type="entry name" value="DNA ligase"/>
    <property type="match status" value="1"/>
</dbReference>
<dbReference type="FunFam" id="3.30.470.30:FF:000001">
    <property type="entry name" value="DNA ligase"/>
    <property type="match status" value="1"/>
</dbReference>
<dbReference type="Gene3D" id="6.20.10.30">
    <property type="match status" value="1"/>
</dbReference>
<dbReference type="Gene3D" id="1.10.150.20">
    <property type="entry name" value="5' to 3' exonuclease, C-terminal subdomain"/>
    <property type="match status" value="2"/>
</dbReference>
<dbReference type="Gene3D" id="3.40.50.10190">
    <property type="entry name" value="BRCT domain"/>
    <property type="match status" value="1"/>
</dbReference>
<dbReference type="Gene3D" id="3.30.470.30">
    <property type="entry name" value="DNA ligase/mRNA capping enzyme"/>
    <property type="match status" value="1"/>
</dbReference>
<dbReference type="Gene3D" id="1.10.287.610">
    <property type="entry name" value="Helix hairpin bin"/>
    <property type="match status" value="1"/>
</dbReference>
<dbReference type="Gene3D" id="2.40.50.140">
    <property type="entry name" value="Nucleic acid-binding proteins"/>
    <property type="match status" value="1"/>
</dbReference>
<dbReference type="HAMAP" id="MF_01588">
    <property type="entry name" value="DNA_ligase_A"/>
    <property type="match status" value="1"/>
</dbReference>
<dbReference type="InterPro" id="IPR001357">
    <property type="entry name" value="BRCT_dom"/>
</dbReference>
<dbReference type="InterPro" id="IPR036420">
    <property type="entry name" value="BRCT_dom_sf"/>
</dbReference>
<dbReference type="InterPro" id="IPR041663">
    <property type="entry name" value="DisA/LigA_HHH"/>
</dbReference>
<dbReference type="InterPro" id="IPR001679">
    <property type="entry name" value="DNA_ligase"/>
</dbReference>
<dbReference type="InterPro" id="IPR018239">
    <property type="entry name" value="DNA_ligase_AS"/>
</dbReference>
<dbReference type="InterPro" id="IPR033136">
    <property type="entry name" value="DNA_ligase_CS"/>
</dbReference>
<dbReference type="InterPro" id="IPR013839">
    <property type="entry name" value="DNAligase_adenylation"/>
</dbReference>
<dbReference type="InterPro" id="IPR013840">
    <property type="entry name" value="DNAligase_N"/>
</dbReference>
<dbReference type="InterPro" id="IPR003583">
    <property type="entry name" value="Hlx-hairpin-Hlx_DNA-bd_motif"/>
</dbReference>
<dbReference type="InterPro" id="IPR012340">
    <property type="entry name" value="NA-bd_OB-fold"/>
</dbReference>
<dbReference type="InterPro" id="IPR004150">
    <property type="entry name" value="NAD_DNA_ligase_OB"/>
</dbReference>
<dbReference type="InterPro" id="IPR010994">
    <property type="entry name" value="RuvA_2-like"/>
</dbReference>
<dbReference type="InterPro" id="IPR004149">
    <property type="entry name" value="Znf_DNAligase_C4"/>
</dbReference>
<dbReference type="NCBIfam" id="TIGR00575">
    <property type="entry name" value="dnlj"/>
    <property type="match status" value="1"/>
</dbReference>
<dbReference type="NCBIfam" id="NF005932">
    <property type="entry name" value="PRK07956.1"/>
    <property type="match status" value="1"/>
</dbReference>
<dbReference type="PANTHER" id="PTHR23389">
    <property type="entry name" value="CHROMOSOME TRANSMISSION FIDELITY FACTOR 18"/>
    <property type="match status" value="1"/>
</dbReference>
<dbReference type="PANTHER" id="PTHR23389:SF9">
    <property type="entry name" value="DNA LIGASE"/>
    <property type="match status" value="1"/>
</dbReference>
<dbReference type="Pfam" id="PF00533">
    <property type="entry name" value="BRCT"/>
    <property type="match status" value="1"/>
</dbReference>
<dbReference type="Pfam" id="PF01653">
    <property type="entry name" value="DNA_ligase_aden"/>
    <property type="match status" value="1"/>
</dbReference>
<dbReference type="Pfam" id="PF03120">
    <property type="entry name" value="DNA_ligase_OB"/>
    <property type="match status" value="1"/>
</dbReference>
<dbReference type="Pfam" id="PF03119">
    <property type="entry name" value="DNA_ligase_ZBD"/>
    <property type="match status" value="1"/>
</dbReference>
<dbReference type="Pfam" id="PF12826">
    <property type="entry name" value="HHH_2"/>
    <property type="match status" value="1"/>
</dbReference>
<dbReference type="Pfam" id="PF14520">
    <property type="entry name" value="HHH_5"/>
    <property type="match status" value="1"/>
</dbReference>
<dbReference type="Pfam" id="PF22745">
    <property type="entry name" value="Nlig-Ia"/>
    <property type="match status" value="1"/>
</dbReference>
<dbReference type="PIRSF" id="PIRSF001604">
    <property type="entry name" value="LigA"/>
    <property type="match status" value="1"/>
</dbReference>
<dbReference type="SMART" id="SM00292">
    <property type="entry name" value="BRCT"/>
    <property type="match status" value="1"/>
</dbReference>
<dbReference type="SMART" id="SM00278">
    <property type="entry name" value="HhH1"/>
    <property type="match status" value="4"/>
</dbReference>
<dbReference type="SMART" id="SM00532">
    <property type="entry name" value="LIGANc"/>
    <property type="match status" value="1"/>
</dbReference>
<dbReference type="SUPFAM" id="SSF52113">
    <property type="entry name" value="BRCT domain"/>
    <property type="match status" value="1"/>
</dbReference>
<dbReference type="SUPFAM" id="SSF56091">
    <property type="entry name" value="DNA ligase/mRNA capping enzyme, catalytic domain"/>
    <property type="match status" value="1"/>
</dbReference>
<dbReference type="SUPFAM" id="SSF50249">
    <property type="entry name" value="Nucleic acid-binding proteins"/>
    <property type="match status" value="1"/>
</dbReference>
<dbReference type="SUPFAM" id="SSF47781">
    <property type="entry name" value="RuvA domain 2-like"/>
    <property type="match status" value="1"/>
</dbReference>
<dbReference type="PROSITE" id="PS50172">
    <property type="entry name" value="BRCT"/>
    <property type="match status" value="1"/>
</dbReference>
<dbReference type="PROSITE" id="PS01055">
    <property type="entry name" value="DNA_LIGASE_N1"/>
    <property type="match status" value="1"/>
</dbReference>
<dbReference type="PROSITE" id="PS01056">
    <property type="entry name" value="DNA_LIGASE_N2"/>
    <property type="match status" value="1"/>
</dbReference>
<accession>Q82TW6</accession>